<keyword id="KW-0007">Acetylation</keyword>
<keyword id="KW-0963">Cytoplasm</keyword>
<keyword id="KW-0539">Nucleus</keyword>
<keyword id="KW-0597">Phosphoprotein</keyword>
<keyword id="KW-1185">Reference proteome</keyword>
<keyword id="KW-0677">Repeat</keyword>
<keyword id="KW-0833">Ubl conjugation pathway</keyword>
<sequence length="1230" mass="136376">MASASYHISNLLEKMTSSDKDFRFMATNDLMTELQKDSIKLDDDSERKVVKMILKLLEDKNGEVQNLAVKCLGPLVSKVKEYQVETIVDTLCTNMLSDKEQLRDISSIGLKTVIGELPPASSGSALAANVCKKITGRLTSAIAKQEDVSVQLEALDIMADMLSRQGGLLVNFHPSILTCLLPQLTSPRLAVRKRTIIALGHLVMSCGNIVFVDLIEHLLSELSKNDSMSTTRTYIQCIAAISRQAGHRIGEYLEKIIPLVVKFCNVDDDELREYCIQAFESFVRRCPKEVYPHVSTIINICLKYLTYDPNYNYDDEDEDENAMDADGGDDDDQGSDDEYSDDDDMSWKVRRAAAKCLDAVVSTRHEMLPEFYKTVSPALISRFKEREENVKADVFHAYLSLLKQTRPVQSWLCDPDAMEQGETPLTMLQSQVPNIVKALHKQMKEKSVKTRQCCFNMLTELVNVLPGALTQHIPVLVPGIIFSLNDKSSSSNLKIDALSCLYVILCNHSPQVFHPHVQALVPPVVACVGDPFYKITSEALLVTQQLVKVIRPLDQPSSFDATPYIKDLFTCTIKRLKAADIDQEVKERAISCMGQIICNLGDNLGSDLPNTLQIFLERLKNEITRLTTVKALTLIAGSPLKIDLRPVLGEGVPILASFLRKNQRALKLGTLSALDILIKNYSDSLTAAMIDAVLDELPPLISESDMHVSQMAISFLTTLAKVYPSSLSKISGSILNELIGLVRSPLLQGGALSAMLDFFQALVVTGTNNLGYMDLLRMLTGPVYSQSTALTHKQSYYSIAKCVAALTRACPKEGPAVVGQFIQDVKNSRSTDSIRLLALLSLGEVGHHIDLSGQLELKSVILEAFSSPSEEVKSAASYALGSISVGNLPEYLPFVLQEITSQPKRQYLLLHSLKEIISSASVVGLKPYVENIWALLLKHCECAEEGTRNVVAECLGKLTLIDPETLLPRLKGYLISGSSYARSSVVTAVKFTISDHPQPIDPLLKNCIGDFLKTLEDPDLNVRRVALVTFNSAAHNKPSLIRDLLDTVLPHLYNETKVRKELIREVEMGPFKHTVDDGLDIRKAAFECMYTLLDSCLDRLDIFEFLNHVEDGLKDHYDIKMLTFLMLVRLSTLCPSAVLQRLDRLVEPLRATCTTKVKANSVKQEFEKQDELKRSAMRAVAALLTIPEAEKSPLMSEFQSQISSNPELAAIFESIQKDSSSTNLESMDTS</sequence>
<gene>
    <name type="primary">CAND1</name>
</gene>
<feature type="initiator methionine" description="Removed" evidence="3">
    <location>
        <position position="1"/>
    </location>
</feature>
<feature type="chain" id="PRO_0000327913" description="Cullin-associated NEDD8-dissociated protein 1">
    <location>
        <begin position="2"/>
        <end position="1230"/>
    </location>
</feature>
<feature type="repeat" description="HEAT 1">
    <location>
        <begin position="2"/>
        <end position="39"/>
    </location>
</feature>
<feature type="repeat" description="HEAT 2">
    <location>
        <begin position="44"/>
        <end position="81"/>
    </location>
</feature>
<feature type="repeat" description="HEAT 3">
    <location>
        <begin position="83"/>
        <end position="119"/>
    </location>
</feature>
<feature type="repeat" description="HEAT 4">
    <location>
        <begin position="131"/>
        <end position="165"/>
    </location>
</feature>
<feature type="repeat" description="HEAT 5">
    <location>
        <begin position="171"/>
        <end position="208"/>
    </location>
</feature>
<feature type="repeat" description="HEAT 6">
    <location>
        <begin position="210"/>
        <end position="247"/>
    </location>
</feature>
<feature type="repeat" description="HEAT 7">
    <location>
        <begin position="248"/>
        <end position="282"/>
    </location>
</feature>
<feature type="repeat" description="HEAT 8">
    <location>
        <begin position="289"/>
        <end position="366"/>
    </location>
</feature>
<feature type="repeat" description="HEAT 9">
    <location>
        <begin position="370"/>
        <end position="407"/>
    </location>
</feature>
<feature type="repeat" description="HEAT 10">
    <location>
        <begin position="424"/>
        <end position="467"/>
    </location>
</feature>
<feature type="repeat" description="HEAT 11">
    <location>
        <begin position="471"/>
        <end position="510"/>
    </location>
</feature>
<feature type="repeat" description="HEAT 12">
    <location>
        <begin position="515"/>
        <end position="552"/>
    </location>
</feature>
<feature type="repeat" description="HEAT 13">
    <location>
        <begin position="563"/>
        <end position="602"/>
    </location>
</feature>
<feature type="repeat" description="HEAT 14">
    <location>
        <begin position="606"/>
        <end position="643"/>
    </location>
</feature>
<feature type="repeat" description="HEAT 15">
    <location>
        <begin position="646"/>
        <end position="683"/>
    </location>
</feature>
<feature type="repeat" description="HEAT 16">
    <location>
        <begin position="688"/>
        <end position="725"/>
    </location>
</feature>
<feature type="repeat" description="HEAT 17">
    <location>
        <begin position="729"/>
        <end position="768"/>
    </location>
</feature>
<feature type="repeat" description="HEAT 18">
    <location>
        <begin position="770"/>
        <end position="808"/>
    </location>
</feature>
<feature type="repeat" description="HEAT 19">
    <location>
        <begin position="809"/>
        <end position="845"/>
    </location>
</feature>
<feature type="repeat" description="HEAT 20">
    <location>
        <begin position="852"/>
        <end position="889"/>
    </location>
</feature>
<feature type="repeat" description="HEAT 21">
    <location>
        <begin position="890"/>
        <end position="927"/>
    </location>
</feature>
<feature type="repeat" description="HEAT 22">
    <location>
        <begin position="928"/>
        <end position="960"/>
    </location>
</feature>
<feature type="repeat" description="HEAT 23">
    <location>
        <begin position="961"/>
        <end position="998"/>
    </location>
</feature>
<feature type="repeat" description="HEAT 24">
    <location>
        <begin position="1002"/>
        <end position="1039"/>
    </location>
</feature>
<feature type="repeat" description="HEAT 25">
    <location>
        <begin position="1043"/>
        <end position="1097"/>
    </location>
</feature>
<feature type="repeat" description="HEAT 26">
    <location>
        <begin position="1099"/>
        <end position="1133"/>
    </location>
</feature>
<feature type="repeat" description="HEAT 27">
    <location>
        <begin position="1140"/>
        <end position="1189"/>
    </location>
</feature>
<feature type="region of interest" description="Disordered" evidence="4">
    <location>
        <begin position="315"/>
        <end position="344"/>
    </location>
</feature>
<feature type="modified residue" description="N-acetylalanine" evidence="3">
    <location>
        <position position="2"/>
    </location>
</feature>
<feature type="modified residue" description="N6-acetyllysine" evidence="3">
    <location>
        <position position="55"/>
    </location>
</feature>
<feature type="modified residue" description="Phosphoserine" evidence="3">
    <location>
        <position position="335"/>
    </location>
</feature>
<feature type="modified residue" description="Phosphoserine" evidence="3">
    <location>
        <position position="558"/>
    </location>
</feature>
<feature type="modified residue" description="N6-acetyllysine" evidence="3">
    <location>
        <position position="971"/>
    </location>
</feature>
<organism>
    <name type="scientific">Bos taurus</name>
    <name type="common">Bovine</name>
    <dbReference type="NCBI Taxonomy" id="9913"/>
    <lineage>
        <taxon>Eukaryota</taxon>
        <taxon>Metazoa</taxon>
        <taxon>Chordata</taxon>
        <taxon>Craniata</taxon>
        <taxon>Vertebrata</taxon>
        <taxon>Euteleostomi</taxon>
        <taxon>Mammalia</taxon>
        <taxon>Eutheria</taxon>
        <taxon>Laurasiatheria</taxon>
        <taxon>Artiodactyla</taxon>
        <taxon>Ruminantia</taxon>
        <taxon>Pecora</taxon>
        <taxon>Bovidae</taxon>
        <taxon>Bovinae</taxon>
        <taxon>Bos</taxon>
    </lineage>
</organism>
<reference key="1">
    <citation type="submission" date="2007-07" db="EMBL/GenBank/DDBJ databases">
        <authorList>
            <consortium name="NIH - Mammalian Gene Collection (MGC) project"/>
        </authorList>
    </citation>
    <scope>NUCLEOTIDE SEQUENCE [LARGE SCALE MRNA]</scope>
    <source>
        <strain>Hereford</strain>
        <tissue>Fetal skin</tissue>
    </source>
</reference>
<accession>A7MBJ5</accession>
<name>CAND1_BOVIN</name>
<proteinExistence type="evidence at transcript level"/>
<protein>
    <recommendedName>
        <fullName>Cullin-associated NEDD8-dissociated protein 1</fullName>
    </recommendedName>
    <alternativeName>
        <fullName>Cullin-associated and neddylation-dissociated protein 1</fullName>
    </alternativeName>
</protein>
<dbReference type="EMBL" id="BC151594">
    <property type="protein sequence ID" value="AAI51595.1"/>
    <property type="molecule type" value="mRNA"/>
</dbReference>
<dbReference type="RefSeq" id="NP_001094643.1">
    <property type="nucleotide sequence ID" value="NM_001101173.1"/>
</dbReference>
<dbReference type="SMR" id="A7MBJ5"/>
<dbReference type="BioGRID" id="194654">
    <property type="interactions" value="1"/>
</dbReference>
<dbReference type="FunCoup" id="A7MBJ5">
    <property type="interactions" value="4683"/>
</dbReference>
<dbReference type="STRING" id="9913.ENSBTAP00000013112"/>
<dbReference type="PaxDb" id="9913-ENSBTAP00000013112"/>
<dbReference type="PeptideAtlas" id="A7MBJ5"/>
<dbReference type="Ensembl" id="ENSBTAT00000013112.6">
    <property type="protein sequence ID" value="ENSBTAP00000013112.5"/>
    <property type="gene ID" value="ENSBTAG00000009939.7"/>
</dbReference>
<dbReference type="GeneID" id="538086"/>
<dbReference type="KEGG" id="bta:538086"/>
<dbReference type="CTD" id="55832"/>
<dbReference type="VEuPathDB" id="HostDB:ENSBTAG00000009939"/>
<dbReference type="VGNC" id="VGNC:26734">
    <property type="gene designation" value="CAND1"/>
</dbReference>
<dbReference type="eggNOG" id="KOG1824">
    <property type="taxonomic scope" value="Eukaryota"/>
</dbReference>
<dbReference type="GeneTree" id="ENSGT00390000017740"/>
<dbReference type="HOGENOM" id="CLU_007157_0_0_1"/>
<dbReference type="InParanoid" id="A7MBJ5"/>
<dbReference type="OMA" id="AYIPHFQ"/>
<dbReference type="OrthoDB" id="6260732at2759"/>
<dbReference type="TreeFam" id="TF300355"/>
<dbReference type="Reactome" id="R-BTA-6798695">
    <property type="pathway name" value="Neutrophil degranulation"/>
</dbReference>
<dbReference type="Reactome" id="R-BTA-8951664">
    <property type="pathway name" value="Neddylation"/>
</dbReference>
<dbReference type="Reactome" id="R-BTA-917937">
    <property type="pathway name" value="Iron uptake and transport"/>
</dbReference>
<dbReference type="Proteomes" id="UP000009136">
    <property type="component" value="Chromosome 5"/>
</dbReference>
<dbReference type="Bgee" id="ENSBTAG00000009939">
    <property type="expression patterns" value="Expressed in conceptus and 110 other cell types or tissues"/>
</dbReference>
<dbReference type="GO" id="GO:0031461">
    <property type="term" value="C:cullin-RING ubiquitin ligase complex"/>
    <property type="evidence" value="ECO:0000250"/>
    <property type="project" value="UniProtKB"/>
</dbReference>
<dbReference type="GO" id="GO:0005737">
    <property type="term" value="C:cytoplasm"/>
    <property type="evidence" value="ECO:0000250"/>
    <property type="project" value="UniProtKB"/>
</dbReference>
<dbReference type="GO" id="GO:0005634">
    <property type="term" value="C:nucleus"/>
    <property type="evidence" value="ECO:0000250"/>
    <property type="project" value="UniProtKB"/>
</dbReference>
<dbReference type="GO" id="GO:0016567">
    <property type="term" value="P:protein ubiquitination"/>
    <property type="evidence" value="ECO:0000250"/>
    <property type="project" value="UniProtKB"/>
</dbReference>
<dbReference type="GO" id="GO:0010265">
    <property type="term" value="P:SCF complex assembly"/>
    <property type="evidence" value="ECO:0000250"/>
    <property type="project" value="UniProtKB"/>
</dbReference>
<dbReference type="FunFam" id="1.25.10.10:FF:000047">
    <property type="entry name" value="Cullin-associated NEDD8-dissociated protein 1"/>
    <property type="match status" value="1"/>
</dbReference>
<dbReference type="Gene3D" id="1.25.10.10">
    <property type="entry name" value="Leucine-rich Repeat Variant"/>
    <property type="match status" value="1"/>
</dbReference>
<dbReference type="InterPro" id="IPR011989">
    <property type="entry name" value="ARM-like"/>
</dbReference>
<dbReference type="InterPro" id="IPR016024">
    <property type="entry name" value="ARM-type_fold"/>
</dbReference>
<dbReference type="InterPro" id="IPR039852">
    <property type="entry name" value="CAND1/CAND2"/>
</dbReference>
<dbReference type="InterPro" id="IPR013932">
    <property type="entry name" value="TATA-bd_TIP120"/>
</dbReference>
<dbReference type="PANTHER" id="PTHR12696">
    <property type="entry name" value="TIP120"/>
    <property type="match status" value="1"/>
</dbReference>
<dbReference type="Pfam" id="PF13513">
    <property type="entry name" value="HEAT_EZ"/>
    <property type="match status" value="1"/>
</dbReference>
<dbReference type="Pfam" id="PF08623">
    <property type="entry name" value="TIP120"/>
    <property type="match status" value="1"/>
</dbReference>
<dbReference type="SUPFAM" id="SSF48371">
    <property type="entry name" value="ARM repeat"/>
    <property type="match status" value="1"/>
</dbReference>
<evidence type="ECO:0000250" key="1"/>
<evidence type="ECO:0000250" key="2">
    <source>
        <dbReference type="UniProtKB" id="P97536"/>
    </source>
</evidence>
<evidence type="ECO:0000250" key="3">
    <source>
        <dbReference type="UniProtKB" id="Q86VP6"/>
    </source>
</evidence>
<evidence type="ECO:0000256" key="4">
    <source>
        <dbReference type="SAM" id="MobiDB-lite"/>
    </source>
</evidence>
<evidence type="ECO:0000305" key="5"/>
<comment type="function">
    <text evidence="1">Key assembly factor of SCF (SKP1-CUL1-F-box protein) E3 ubiquitin ligase complexes that promotes the exchange of the substrate-recognition F-box subunit in SCF complexes, thereby playing a key role in the cellular repertoire of SCF complexes. Acts as a F-box protein exchange factor. The exchange activity of CAND1 is coupled with cycles of neddylation conjugation: in the deneddylated state, cullin-binding CAND1 binds CUL1-RBX1, increasing dissociation of the SCF complex and promoting exchange of the F-box protein. Probably plays a similar role in other cullin-RING E3 ubiquitin ligase complexes (By similarity).</text>
</comment>
<comment type="subunit">
    <text evidence="2 3">Interacts with TBP (By similarity). Part of a complex that contains CUL1 and RBX1. Interacts with unneddylated cullins: interacts with CUL1, CUL2, CUL3, CUL4A, CUL4B and CUL5. Does not bind neddylated CUL1. Interaction with cullins is abolished in presence of COMMD1, which antagonizes with CAND1 for interacting with cullins. Interacts with ERCC6 (By similarity). Interacts with DCUN1D1, DCUN1D2, DCUN1D3, DCUN1D4 and DCUN1D5; these interactions are bridged by cullins and strongly inhibits the neddylation of cullins (By similarity).</text>
</comment>
<comment type="subcellular location">
    <subcellularLocation>
        <location evidence="3">Cytoplasm</location>
    </subcellularLocation>
    <subcellularLocation>
        <location evidence="3">Nucleus</location>
    </subcellularLocation>
    <text evidence="3">Predominantly cytoplasmic.</text>
</comment>
<comment type="similarity">
    <text evidence="5">Belongs to the CAND family.</text>
</comment>